<evidence type="ECO:0000250" key="1">
    <source>
        <dbReference type="UniProtKB" id="P30405"/>
    </source>
</evidence>
<evidence type="ECO:0000255" key="2"/>
<evidence type="ECO:0000255" key="3">
    <source>
        <dbReference type="PROSITE-ProRule" id="PRU00156"/>
    </source>
</evidence>
<evidence type="ECO:0000269" key="4">
    <source>
    </source>
</evidence>
<evidence type="ECO:0000305" key="5"/>
<name>PPIA_NEOCA</name>
<accession>P84343</accession>
<reference evidence="5" key="1">
    <citation type="submission" date="2003-09" db="EMBL/GenBank/DDBJ databases">
        <title>USDA-WashU Neospora EST project.</title>
        <authorList>
            <person name="Cole R."/>
            <person name="Fogarty S."/>
            <person name="Tang K."/>
            <person name="Howe D.K."/>
            <person name="Sibley L.D."/>
            <person name="Clifton S."/>
            <person name="Marra M."/>
            <person name="Hillier L."/>
            <person name="Pape D."/>
            <person name="Martin J."/>
            <person name="Wylie T."/>
            <person name="Theising B."/>
            <person name="Bowers Y."/>
            <person name="Gibbons M."/>
            <person name="Ritter E."/>
            <person name="Bennet J."/>
            <person name="Ronko I."/>
            <person name="Tsagareishvili R."/>
            <person name="Fedele M."/>
            <person name="Belaygorod L."/>
            <person name="Franklin C."/>
            <person name="Carr L.M."/>
            <person name="Grow A."/>
            <person name="Maguire L."/>
            <person name="Wadkins J."/>
            <person name="Richey J."/>
            <person name="Waterston R."/>
            <person name="Wilson R."/>
        </authorList>
    </citation>
    <scope>NUCLEOTIDE SEQUENCE [MRNA]</scope>
    <source>
        <tissue>Tachyzoite</tissue>
    </source>
</reference>
<reference evidence="5" key="2">
    <citation type="journal article" date="2005" name="Infect. Immun.">
        <title>Identification and characterization of Neospora caninum cyclophilin that elicits gamma interferon production.</title>
        <authorList>
            <person name="Tuo W."/>
            <person name="Fetterer R."/>
            <person name="Jenkins M."/>
            <person name="Dubey J.P."/>
        </authorList>
    </citation>
    <scope>PROTEIN SEQUENCE OF 24-38; 54-63; 70-105; 109-131 AND 145-169</scope>
    <scope>FUNCTION</scope>
    <source>
        <strain evidence="4">Nc-1</strain>
        <tissue evidence="4">Tachyzoite</tissue>
    </source>
</reference>
<feature type="signal peptide" evidence="2">
    <location>
        <begin position="1"/>
        <end position="17"/>
    </location>
</feature>
<feature type="chain" id="PRO_0000043374" description="Peptidyl-prolyl cis-trans isomerase" evidence="2">
    <location>
        <begin position="18"/>
        <end position="178"/>
    </location>
</feature>
<feature type="domain" description="PPIase cyclophilin-type" evidence="3">
    <location>
        <begin position="26"/>
        <end position="177"/>
    </location>
</feature>
<protein>
    <recommendedName>
        <fullName>Peptidyl-prolyl cis-trans isomerase</fullName>
        <shortName>PPIase</shortName>
        <ecNumber>5.2.1.8</ecNumber>
    </recommendedName>
    <alternativeName>
        <fullName>Cyclophilin</fullName>
    </alternativeName>
    <alternativeName>
        <fullName>NcCyP</fullName>
    </alternativeName>
    <alternativeName>
        <fullName>Rotamase</fullName>
    </alternativeName>
</protein>
<dbReference type="EC" id="5.2.1.8"/>
<dbReference type="EMBL" id="CF422590">
    <property type="status" value="NOT_ANNOTATED_CDS"/>
    <property type="molecule type" value="mRNA"/>
</dbReference>
<dbReference type="SMR" id="P84343"/>
<dbReference type="VEuPathDB" id="ToxoDB:Ncaninum_LIV_000730500"/>
<dbReference type="VEuPathDB" id="ToxoDB:NCLIV_004790"/>
<dbReference type="OMA" id="DFENHNG"/>
<dbReference type="GO" id="GO:0005737">
    <property type="term" value="C:cytoplasm"/>
    <property type="evidence" value="ECO:0007669"/>
    <property type="project" value="TreeGrafter"/>
</dbReference>
<dbReference type="GO" id="GO:0016018">
    <property type="term" value="F:cyclosporin A binding"/>
    <property type="evidence" value="ECO:0007669"/>
    <property type="project" value="TreeGrafter"/>
</dbReference>
<dbReference type="GO" id="GO:0003755">
    <property type="term" value="F:peptidyl-prolyl cis-trans isomerase activity"/>
    <property type="evidence" value="ECO:0007669"/>
    <property type="project" value="UniProtKB-KW"/>
</dbReference>
<dbReference type="GO" id="GO:0006457">
    <property type="term" value="P:protein folding"/>
    <property type="evidence" value="ECO:0007669"/>
    <property type="project" value="InterPro"/>
</dbReference>
<dbReference type="FunFam" id="2.40.100.10:FF:000025">
    <property type="entry name" value="Peptidyl-prolyl cis-trans isomerase CYP19-2"/>
    <property type="match status" value="1"/>
</dbReference>
<dbReference type="Gene3D" id="2.40.100.10">
    <property type="entry name" value="Cyclophilin-like"/>
    <property type="match status" value="1"/>
</dbReference>
<dbReference type="InterPro" id="IPR029000">
    <property type="entry name" value="Cyclophilin-like_dom_sf"/>
</dbReference>
<dbReference type="InterPro" id="IPR024936">
    <property type="entry name" value="Cyclophilin-type_PPIase"/>
</dbReference>
<dbReference type="InterPro" id="IPR020892">
    <property type="entry name" value="Cyclophilin-type_PPIase_CS"/>
</dbReference>
<dbReference type="InterPro" id="IPR002130">
    <property type="entry name" value="Cyclophilin-type_PPIase_dom"/>
</dbReference>
<dbReference type="PANTHER" id="PTHR11071">
    <property type="entry name" value="PEPTIDYL-PROLYL CIS-TRANS ISOMERASE"/>
    <property type="match status" value="1"/>
</dbReference>
<dbReference type="PANTHER" id="PTHR11071:SF561">
    <property type="entry name" value="PEPTIDYL-PROLYL CIS-TRANS ISOMERASE D-RELATED"/>
    <property type="match status" value="1"/>
</dbReference>
<dbReference type="Pfam" id="PF00160">
    <property type="entry name" value="Pro_isomerase"/>
    <property type="match status" value="1"/>
</dbReference>
<dbReference type="PIRSF" id="PIRSF001467">
    <property type="entry name" value="Peptidylpro_ismrse"/>
    <property type="match status" value="1"/>
</dbReference>
<dbReference type="PRINTS" id="PR00153">
    <property type="entry name" value="CSAPPISMRASE"/>
</dbReference>
<dbReference type="SUPFAM" id="SSF50891">
    <property type="entry name" value="Cyclophilin-like"/>
    <property type="match status" value="1"/>
</dbReference>
<dbReference type="PROSITE" id="PS00170">
    <property type="entry name" value="CSA_PPIASE_1"/>
    <property type="match status" value="1"/>
</dbReference>
<dbReference type="PROSITE" id="PS50072">
    <property type="entry name" value="CSA_PPIASE_2"/>
    <property type="match status" value="1"/>
</dbReference>
<comment type="function">
    <text evidence="4">PPIases accelerate the folding of proteins. It catalyzes the cis-trans isomerization of proline imidic peptide bonds in oligopeptides. Up-regulates interferon gamma production by bovine T-cells. Stimulates high levels of IFN-gamma production by peripheral blood mononuclear cells and T-cells. The IFN-gamma-inducing effect is blocked by cyclosporin A (CsA).</text>
</comment>
<comment type="catalytic activity">
    <reaction evidence="1">
        <text>[protein]-peptidylproline (omega=180) = [protein]-peptidylproline (omega=0)</text>
        <dbReference type="Rhea" id="RHEA:16237"/>
        <dbReference type="Rhea" id="RHEA-COMP:10747"/>
        <dbReference type="Rhea" id="RHEA-COMP:10748"/>
        <dbReference type="ChEBI" id="CHEBI:83833"/>
        <dbReference type="ChEBI" id="CHEBI:83834"/>
        <dbReference type="EC" id="5.2.1.8"/>
    </reaction>
</comment>
<comment type="similarity">
    <text evidence="5">Belongs to the cyclophilin-type PPIase family. PPIase A subfamily.</text>
</comment>
<sequence length="178" mass="19379">MKLLFFFLVLAVSAAVAENAGVQKAFMDIEIDGESAGRIVLELRGDVVPKTVKNFIGLFDKYKGSTFHRVIADFMIQGGDFENHNGTGGHSIYGPRFEDENFTLKHDRGVISMANAGPNTNGSQFFITTVKTEWLDGRHVVFGKITNDSWPTVQAIEALGSSGGRPSKIAKITDIGLL</sequence>
<proteinExistence type="evidence at protein level"/>
<organism>
    <name type="scientific">Neospora caninum</name>
    <name type="common">Coccidian parasite</name>
    <dbReference type="NCBI Taxonomy" id="29176"/>
    <lineage>
        <taxon>Eukaryota</taxon>
        <taxon>Sar</taxon>
        <taxon>Alveolata</taxon>
        <taxon>Apicomplexa</taxon>
        <taxon>Conoidasida</taxon>
        <taxon>Coccidia</taxon>
        <taxon>Eucoccidiorida</taxon>
        <taxon>Eimeriorina</taxon>
        <taxon>Sarcocystidae</taxon>
        <taxon>Neospora</taxon>
    </lineage>
</organism>
<keyword id="KW-0903">Direct protein sequencing</keyword>
<keyword id="KW-0413">Isomerase</keyword>
<keyword id="KW-0697">Rotamase</keyword>
<keyword id="KW-0732">Signal</keyword>